<feature type="chain" id="PRO_0000260072" description="Probable N(6)-adenosine-methyltransferase MT-A70-like">
    <location>
        <begin position="1"/>
        <end position="706"/>
    </location>
</feature>
<feature type="region of interest" description="Disordered" evidence="4">
    <location>
        <begin position="64"/>
        <end position="114"/>
    </location>
</feature>
<feature type="region of interest" description="Disordered" evidence="4">
    <location>
        <begin position="223"/>
        <end position="261"/>
    </location>
</feature>
<feature type="region of interest" description="Positively charged region required for RNA-binding" evidence="2">
    <location>
        <begin position="567"/>
        <end position="580"/>
    </location>
</feature>
<feature type="region of interest" description="Disordered" evidence="4">
    <location>
        <begin position="669"/>
        <end position="706"/>
    </location>
</feature>
<feature type="compositionally biased region" description="Low complexity" evidence="4">
    <location>
        <begin position="103"/>
        <end position="114"/>
    </location>
</feature>
<feature type="compositionally biased region" description="Pro residues" evidence="4">
    <location>
        <begin position="227"/>
        <end position="236"/>
    </location>
</feature>
<feature type="binding site" evidence="2">
    <location>
        <begin position="479"/>
        <end position="480"/>
    </location>
    <ligand>
        <name>S-adenosyl-L-methionine</name>
        <dbReference type="ChEBI" id="CHEBI:59789"/>
    </ligand>
</feature>
<feature type="binding site" evidence="2">
    <location>
        <position position="497"/>
    </location>
    <ligand>
        <name>S-adenosyl-L-methionine</name>
        <dbReference type="ChEBI" id="CHEBI:59789"/>
    </ligand>
</feature>
<feature type="binding site" evidence="2">
    <location>
        <position position="614"/>
    </location>
    <ligand>
        <name>S-adenosyl-L-methionine</name>
        <dbReference type="ChEBI" id="CHEBI:59789"/>
    </ligand>
</feature>
<feature type="binding site" evidence="2">
    <location>
        <begin position="637"/>
        <end position="640"/>
    </location>
    <ligand>
        <name>S-adenosyl-L-methionine</name>
        <dbReference type="ChEBI" id="CHEBI:59789"/>
    </ligand>
</feature>
<feature type="binding site" evidence="2">
    <location>
        <begin position="650"/>
        <end position="651"/>
    </location>
    <ligand>
        <name>S-adenosyl-L-methionine</name>
        <dbReference type="ChEBI" id="CHEBI:59789"/>
    </ligand>
</feature>
<feature type="sequence conflict" description="In Ref. 4; AK101174." evidence="5" ref="4">
    <original>M</original>
    <variation>I</variation>
    <location>
        <position position="504"/>
    </location>
</feature>
<feature type="sequence conflict" description="In Ref. 4; AK101174." evidence="5" ref="4">
    <original>D</original>
    <variation>N</variation>
    <location>
        <position position="513"/>
    </location>
</feature>
<feature type="sequence conflict" description="In Ref. 4; AK070286." evidence="5" ref="4">
    <original>R</original>
    <variation>L</variation>
    <location>
        <position position="537"/>
    </location>
</feature>
<feature type="sequence conflict" description="In Ref. 4; AK101174." evidence="5" ref="4">
    <original>K</original>
    <variation>R</variation>
    <location>
        <position position="614"/>
    </location>
</feature>
<evidence type="ECO:0000250" key="1">
    <source>
        <dbReference type="UniProtKB" id="O82486"/>
    </source>
</evidence>
<evidence type="ECO:0000250" key="2">
    <source>
        <dbReference type="UniProtKB" id="Q86U44"/>
    </source>
</evidence>
<evidence type="ECO:0000255" key="3">
    <source>
        <dbReference type="PROSITE-ProRule" id="PRU00489"/>
    </source>
</evidence>
<evidence type="ECO:0000256" key="4">
    <source>
        <dbReference type="SAM" id="MobiDB-lite"/>
    </source>
</evidence>
<evidence type="ECO:0000305" key="5"/>
<name>MTA70_ORYSJ</name>
<proteinExistence type="evidence at transcript level"/>
<gene>
    <name type="ordered locus">Os02g0672600</name>
    <name type="ordered locus">LOC_Os02g45110</name>
    <name type="ORF">OJ1197_E09.7</name>
    <name type="ORF">OJ1493_H11.20</name>
</gene>
<reference key="1">
    <citation type="journal article" date="2005" name="Nature">
        <title>The map-based sequence of the rice genome.</title>
        <authorList>
            <consortium name="International rice genome sequencing project (IRGSP)"/>
        </authorList>
    </citation>
    <scope>NUCLEOTIDE SEQUENCE [LARGE SCALE GENOMIC DNA]</scope>
    <source>
        <strain>cv. Nipponbare</strain>
    </source>
</reference>
<reference key="2">
    <citation type="journal article" date="2008" name="Nucleic Acids Res.">
        <title>The rice annotation project database (RAP-DB): 2008 update.</title>
        <authorList>
            <consortium name="The rice annotation project (RAP)"/>
        </authorList>
    </citation>
    <scope>GENOME REANNOTATION</scope>
    <source>
        <strain>cv. Nipponbare</strain>
    </source>
</reference>
<reference key="3">
    <citation type="journal article" date="2013" name="Rice">
        <title>Improvement of the Oryza sativa Nipponbare reference genome using next generation sequence and optical map data.</title>
        <authorList>
            <person name="Kawahara Y."/>
            <person name="de la Bastide M."/>
            <person name="Hamilton J.P."/>
            <person name="Kanamori H."/>
            <person name="McCombie W.R."/>
            <person name="Ouyang S."/>
            <person name="Schwartz D.C."/>
            <person name="Tanaka T."/>
            <person name="Wu J."/>
            <person name="Zhou S."/>
            <person name="Childs K.L."/>
            <person name="Davidson R.M."/>
            <person name="Lin H."/>
            <person name="Quesada-Ocampo L."/>
            <person name="Vaillancourt B."/>
            <person name="Sakai H."/>
            <person name="Lee S.S."/>
            <person name="Kim J."/>
            <person name="Numa H."/>
            <person name="Itoh T."/>
            <person name="Buell C.R."/>
            <person name="Matsumoto T."/>
        </authorList>
    </citation>
    <scope>GENOME REANNOTATION</scope>
    <source>
        <strain>cv. Nipponbare</strain>
    </source>
</reference>
<reference key="4">
    <citation type="journal article" date="2003" name="Science">
        <title>Collection, mapping, and annotation of over 28,000 cDNA clones from japonica rice.</title>
        <authorList>
            <consortium name="The rice full-length cDNA consortium"/>
        </authorList>
    </citation>
    <scope>NUCLEOTIDE SEQUENCE [LARGE SCALE MRNA]</scope>
    <source>
        <strain>cv. Nipponbare</strain>
    </source>
</reference>
<sequence>MEAQADAGGDDLAAMREQCRSLEEAIGFRRETQMGLVASLQRLVPDLVPSLDRSLRIIAAFNDRPFVPTPNPDGGHGKSPAALKPHHRRALPDPARSTRRKTSPGSSPASVAAAPGGLDAVRTMVAVCLLELVPFAEIDAAALARRLQAESSSASEAERTALADLAAELGGSAASAVVLALRRIAEDTGGVQIEEAMIGGKSMTMVWAIDRNKLLKELPESATLPLLQPPPAPQMPPSETDAGSAMIPRTPQQQQPQPDMWPHSMPPIFPRPRGMTMQGMQRVPGVPPGLMPLQRPFMGPAGVITMGGGVGPSPNQQKQKSEEDELKDLELLLNKKTYREKQNTKTGEELLDLIHRPTAKETAVAAKFKTKGGSQLKEYCTNLTKEDCRRQSGSFVACDKVHFRRIIAPHTDTNLGDCSFLDTCRHTKTCKYVHYELDQTPDIPPMMAGALAPPRQIRLQRAEYCSEVELGEAQWINCDIRNFRMDILGQFGVIMADPPWDIHMELPYGTMADDEMRTLNVPALQTDGLIFLWVTGRAMELGRECLELWGYKRVEEIIWVKTNQLQRIIRTGRTGHWLNHSKEHCLVGIKGNPLVNRNIDTDVIVAEVRETSRKPDEMYPMLERISPRTRKLELFARMHNAHAGWLSLGNQLNGVRLVDEGLRARYKAAYPDSEVQPPSPPRASAPIDGDQGTSQKPTVSDGERPA</sequence>
<organism>
    <name type="scientific">Oryza sativa subsp. japonica</name>
    <name type="common">Rice</name>
    <dbReference type="NCBI Taxonomy" id="39947"/>
    <lineage>
        <taxon>Eukaryota</taxon>
        <taxon>Viridiplantae</taxon>
        <taxon>Streptophyta</taxon>
        <taxon>Embryophyta</taxon>
        <taxon>Tracheophyta</taxon>
        <taxon>Spermatophyta</taxon>
        <taxon>Magnoliopsida</taxon>
        <taxon>Liliopsida</taxon>
        <taxon>Poales</taxon>
        <taxon>Poaceae</taxon>
        <taxon>BOP clade</taxon>
        <taxon>Oryzoideae</taxon>
        <taxon>Oryzeae</taxon>
        <taxon>Oryzinae</taxon>
        <taxon>Oryza</taxon>
        <taxon>Oryza sativa</taxon>
    </lineage>
</organism>
<protein>
    <recommendedName>
        <fullName>Probable N(6)-adenosine-methyltransferase MT-A70-like</fullName>
        <ecNumber evidence="1">2.1.1.348</ecNumber>
    </recommendedName>
</protein>
<keyword id="KW-0489">Methyltransferase</keyword>
<keyword id="KW-0539">Nucleus</keyword>
<keyword id="KW-1185">Reference proteome</keyword>
<keyword id="KW-0694">RNA-binding</keyword>
<keyword id="KW-0949">S-adenosyl-L-methionine</keyword>
<keyword id="KW-0808">Transferase</keyword>
<dbReference type="EC" id="2.1.1.348" evidence="1"/>
<dbReference type="EMBL" id="AP004160">
    <property type="protein sequence ID" value="BAD27818.1"/>
    <property type="molecule type" value="Genomic_DNA"/>
</dbReference>
<dbReference type="EMBL" id="AP004188">
    <property type="protein sequence ID" value="BAD27860.1"/>
    <property type="molecule type" value="Genomic_DNA"/>
</dbReference>
<dbReference type="EMBL" id="AP008208">
    <property type="protein sequence ID" value="BAF09621.1"/>
    <property type="molecule type" value="Genomic_DNA"/>
</dbReference>
<dbReference type="EMBL" id="AP014958">
    <property type="protein sequence ID" value="BAS80247.1"/>
    <property type="molecule type" value="Genomic_DNA"/>
</dbReference>
<dbReference type="EMBL" id="AK070286">
    <property type="status" value="NOT_ANNOTATED_CDS"/>
    <property type="molecule type" value="mRNA"/>
</dbReference>
<dbReference type="EMBL" id="AK101174">
    <property type="status" value="NOT_ANNOTATED_CDS"/>
    <property type="molecule type" value="mRNA"/>
</dbReference>
<dbReference type="RefSeq" id="XP_015625439.1">
    <property type="nucleotide sequence ID" value="XM_015769953.1"/>
</dbReference>
<dbReference type="SMR" id="Q6EU10"/>
<dbReference type="FunCoup" id="Q6EU10">
    <property type="interactions" value="349"/>
</dbReference>
<dbReference type="STRING" id="39947.Q6EU10"/>
<dbReference type="iPTMnet" id="Q6EU10"/>
<dbReference type="PaxDb" id="39947-Q6EU10"/>
<dbReference type="EnsemblPlants" id="Os02t0672600-01">
    <property type="protein sequence ID" value="Os02t0672600-01"/>
    <property type="gene ID" value="Os02g0672600"/>
</dbReference>
<dbReference type="Gramene" id="Os02t0672600-01">
    <property type="protein sequence ID" value="Os02t0672600-01"/>
    <property type="gene ID" value="Os02g0672600"/>
</dbReference>
<dbReference type="KEGG" id="dosa:Os02g0672600"/>
<dbReference type="eggNOG" id="KOG2098">
    <property type="taxonomic scope" value="Eukaryota"/>
</dbReference>
<dbReference type="HOGENOM" id="CLU_018702_3_0_1"/>
<dbReference type="InParanoid" id="Q6EU10"/>
<dbReference type="OMA" id="PESAQYQ"/>
<dbReference type="OrthoDB" id="10262526at2759"/>
<dbReference type="Proteomes" id="UP000000763">
    <property type="component" value="Chromosome 2"/>
</dbReference>
<dbReference type="Proteomes" id="UP000059680">
    <property type="component" value="Chromosome 2"/>
</dbReference>
<dbReference type="GO" id="GO:0016607">
    <property type="term" value="C:nuclear speck"/>
    <property type="evidence" value="ECO:0007669"/>
    <property type="project" value="EnsemblPlants"/>
</dbReference>
<dbReference type="GO" id="GO:0005634">
    <property type="term" value="C:nucleus"/>
    <property type="evidence" value="ECO:0000318"/>
    <property type="project" value="GO_Central"/>
</dbReference>
<dbReference type="GO" id="GO:0008168">
    <property type="term" value="F:methyltransferase activity"/>
    <property type="evidence" value="ECO:0000318"/>
    <property type="project" value="GO_Central"/>
</dbReference>
<dbReference type="GO" id="GO:0001734">
    <property type="term" value="F:mRNA m(6)A methyltransferase activity"/>
    <property type="evidence" value="ECO:0007669"/>
    <property type="project" value="UniProtKB-EC"/>
</dbReference>
<dbReference type="GO" id="GO:0003723">
    <property type="term" value="F:RNA binding"/>
    <property type="evidence" value="ECO:0007669"/>
    <property type="project" value="UniProtKB-KW"/>
</dbReference>
<dbReference type="GO" id="GO:0009793">
    <property type="term" value="P:embryo development ending in seed dormancy"/>
    <property type="evidence" value="ECO:0007669"/>
    <property type="project" value="EnsemblPlants"/>
</dbReference>
<dbReference type="GO" id="GO:0032259">
    <property type="term" value="P:methylation"/>
    <property type="evidence" value="ECO:0007669"/>
    <property type="project" value="UniProtKB-KW"/>
</dbReference>
<dbReference type="GO" id="GO:0016556">
    <property type="term" value="P:mRNA modification"/>
    <property type="evidence" value="ECO:0000318"/>
    <property type="project" value="GO_Central"/>
</dbReference>
<dbReference type="InterPro" id="IPR007757">
    <property type="entry name" value="MT-A70-like"/>
</dbReference>
<dbReference type="InterPro" id="IPR029063">
    <property type="entry name" value="SAM-dependent_MTases_sf"/>
</dbReference>
<dbReference type="PANTHER" id="PTHR12829">
    <property type="entry name" value="N6-ADENOSINE-METHYLTRANSFERASE"/>
    <property type="match status" value="1"/>
</dbReference>
<dbReference type="PANTHER" id="PTHR12829:SF2">
    <property type="entry name" value="N6-ADENOSINE-METHYLTRANSFERASE MT-A70-LIKE"/>
    <property type="match status" value="1"/>
</dbReference>
<dbReference type="Pfam" id="PF05063">
    <property type="entry name" value="MT-A70"/>
    <property type="match status" value="1"/>
</dbReference>
<dbReference type="SUPFAM" id="SSF53335">
    <property type="entry name" value="S-adenosyl-L-methionine-dependent methyltransferases"/>
    <property type="match status" value="1"/>
</dbReference>
<dbReference type="PROSITE" id="PS51143">
    <property type="entry name" value="MT_A70"/>
    <property type="match status" value="1"/>
</dbReference>
<accession>Q6EU10</accession>
<accession>A0A0P0VMW0</accession>
<comment type="function">
    <text evidence="1">Probable N6-methyltransferase that methylates adenosine residues of some mRNAs. N6-methyladenosine (m6A), which is present at internal sites of some mRNAs, may play a role in the efficiency of mRNA splicing, transport or translation (By similarity).</text>
</comment>
<comment type="catalytic activity">
    <reaction evidence="1">
        <text>an adenosine in mRNA + S-adenosyl-L-methionine = an N(6)-methyladenosine in mRNA + S-adenosyl-L-homocysteine + H(+)</text>
        <dbReference type="Rhea" id="RHEA:55584"/>
        <dbReference type="Rhea" id="RHEA-COMP:12414"/>
        <dbReference type="Rhea" id="RHEA-COMP:12417"/>
        <dbReference type="ChEBI" id="CHEBI:15378"/>
        <dbReference type="ChEBI" id="CHEBI:57856"/>
        <dbReference type="ChEBI" id="CHEBI:59789"/>
        <dbReference type="ChEBI" id="CHEBI:74411"/>
        <dbReference type="ChEBI" id="CHEBI:74449"/>
        <dbReference type="EC" id="2.1.1.348"/>
    </reaction>
</comment>
<comment type="subcellular location">
    <subcellularLocation>
        <location evidence="1">Nucleus</location>
    </subcellularLocation>
</comment>
<comment type="similarity">
    <text evidence="3">Belongs to the MT-A70-like family.</text>
</comment>